<organism>
    <name type="scientific">Pseudomonas putida (strain GB-1)</name>
    <dbReference type="NCBI Taxonomy" id="76869"/>
    <lineage>
        <taxon>Bacteria</taxon>
        <taxon>Pseudomonadati</taxon>
        <taxon>Pseudomonadota</taxon>
        <taxon>Gammaproteobacteria</taxon>
        <taxon>Pseudomonadales</taxon>
        <taxon>Pseudomonadaceae</taxon>
        <taxon>Pseudomonas</taxon>
    </lineage>
</organism>
<gene>
    <name evidence="1" type="primary">bioF</name>
    <name type="ordered locus">PputGB1_0393</name>
</gene>
<reference key="1">
    <citation type="submission" date="2008-01" db="EMBL/GenBank/DDBJ databases">
        <title>Complete sequence of Pseudomonas putida GB-1.</title>
        <authorList>
            <consortium name="US DOE Joint Genome Institute"/>
            <person name="Copeland A."/>
            <person name="Lucas S."/>
            <person name="Lapidus A."/>
            <person name="Barry K."/>
            <person name="Glavina del Rio T."/>
            <person name="Dalin E."/>
            <person name="Tice H."/>
            <person name="Pitluck S."/>
            <person name="Bruce D."/>
            <person name="Goodwin L."/>
            <person name="Chertkov O."/>
            <person name="Brettin T."/>
            <person name="Detter J.C."/>
            <person name="Han C."/>
            <person name="Kuske C.R."/>
            <person name="Schmutz J."/>
            <person name="Larimer F."/>
            <person name="Land M."/>
            <person name="Hauser L."/>
            <person name="Kyrpides N."/>
            <person name="Kim E."/>
            <person name="McCarthy J.K."/>
            <person name="Richardson P."/>
        </authorList>
    </citation>
    <scope>NUCLEOTIDE SEQUENCE [LARGE SCALE GENOMIC DNA]</scope>
    <source>
        <strain>GB-1</strain>
    </source>
</reference>
<sequence length="390" mass="41369">MAFDLAARLAERRAADLYRQRPLLESPQGPEVVVDGQRLLAFCSNDYLGLANHPEVISAWQAGAERWGVGGGASHLVVGHSTPHHQVEEALAELTGRPRALLFSTGYMANLGAITALVGQGDTVLQDRLNHASLLDGGLLSGARFNRYLHNDSASLASRLDKAVGNTLVVTDGVFSMDGDLADLPALADVARGRGAWLMVDDAHGLGTLGAQGGGIVEHFGLGVADVPVLIGTLGKACGTAGAFVAGSEDLIEALVQFARPYIYTTSQPPALACATLKSLELLRRETWRREHLAALIRQFREGAQQIGLQLMDSPTPIQPIVIGDSAQALRLSRMLRERGLLVTAIRPPTVPAGSARLRVTLSAAHSEAQVQLLLNALAECYPQLENADA</sequence>
<proteinExistence type="inferred from homology"/>
<comment type="function">
    <text evidence="1">Catalyzes the decarboxylative condensation of pimeloyl-[acyl-carrier protein] and L-alanine to produce 8-amino-7-oxononanoate (AON), [acyl-carrier protein], and carbon dioxide.</text>
</comment>
<comment type="catalytic activity">
    <reaction evidence="1">
        <text>6-carboxyhexanoyl-[ACP] + L-alanine + H(+) = (8S)-8-amino-7-oxononanoate + holo-[ACP] + CO2</text>
        <dbReference type="Rhea" id="RHEA:42288"/>
        <dbReference type="Rhea" id="RHEA-COMP:9685"/>
        <dbReference type="Rhea" id="RHEA-COMP:9955"/>
        <dbReference type="ChEBI" id="CHEBI:15378"/>
        <dbReference type="ChEBI" id="CHEBI:16526"/>
        <dbReference type="ChEBI" id="CHEBI:57972"/>
        <dbReference type="ChEBI" id="CHEBI:64479"/>
        <dbReference type="ChEBI" id="CHEBI:78846"/>
        <dbReference type="ChEBI" id="CHEBI:149468"/>
        <dbReference type="EC" id="2.3.1.47"/>
    </reaction>
</comment>
<comment type="cofactor">
    <cofactor evidence="1">
        <name>pyridoxal 5'-phosphate</name>
        <dbReference type="ChEBI" id="CHEBI:597326"/>
    </cofactor>
</comment>
<comment type="pathway">
    <text evidence="1">Cofactor biosynthesis; biotin biosynthesis.</text>
</comment>
<comment type="subunit">
    <text evidence="1">Homodimer.</text>
</comment>
<comment type="similarity">
    <text evidence="1">Belongs to the class-II pyridoxal-phosphate-dependent aminotransferase family. BioF subfamily.</text>
</comment>
<protein>
    <recommendedName>
        <fullName evidence="1">8-amino-7-oxononanoate synthase</fullName>
        <shortName evidence="1">AONS</shortName>
        <ecNumber evidence="1">2.3.1.47</ecNumber>
    </recommendedName>
    <alternativeName>
        <fullName evidence="1">7-keto-8-amino-pelargonic acid synthase</fullName>
        <shortName evidence="1">7-KAP synthase</shortName>
        <shortName evidence="1">KAPA synthase</shortName>
    </alternativeName>
    <alternativeName>
        <fullName evidence="1">8-amino-7-ketopelargonate synthase</fullName>
    </alternativeName>
</protein>
<name>BIOF_PSEPG</name>
<keyword id="KW-0093">Biotin biosynthesis</keyword>
<keyword id="KW-0663">Pyridoxal phosphate</keyword>
<keyword id="KW-0808">Transferase</keyword>
<feature type="chain" id="PRO_0000381080" description="8-amino-7-oxononanoate synthase">
    <location>
        <begin position="1"/>
        <end position="390"/>
    </location>
</feature>
<feature type="binding site" evidence="1">
    <location>
        <position position="19"/>
    </location>
    <ligand>
        <name>substrate</name>
    </ligand>
</feature>
<feature type="binding site" evidence="1">
    <location>
        <begin position="106"/>
        <end position="107"/>
    </location>
    <ligand>
        <name>pyridoxal 5'-phosphate</name>
        <dbReference type="ChEBI" id="CHEBI:597326"/>
    </ligand>
</feature>
<feature type="binding site" evidence="1">
    <location>
        <position position="131"/>
    </location>
    <ligand>
        <name>substrate</name>
    </ligand>
</feature>
<feature type="binding site" evidence="1">
    <location>
        <position position="176"/>
    </location>
    <ligand>
        <name>pyridoxal 5'-phosphate</name>
        <dbReference type="ChEBI" id="CHEBI:597326"/>
    </ligand>
</feature>
<feature type="binding site" evidence="1">
    <location>
        <position position="204"/>
    </location>
    <ligand>
        <name>pyridoxal 5'-phosphate</name>
        <dbReference type="ChEBI" id="CHEBI:597326"/>
    </ligand>
</feature>
<feature type="binding site" evidence="1">
    <location>
        <position position="233"/>
    </location>
    <ligand>
        <name>pyridoxal 5'-phosphate</name>
        <dbReference type="ChEBI" id="CHEBI:597326"/>
    </ligand>
</feature>
<feature type="binding site" evidence="1">
    <location>
        <position position="350"/>
    </location>
    <ligand>
        <name>substrate</name>
    </ligand>
</feature>
<feature type="modified residue" description="N6-(pyridoxal phosphate)lysine" evidence="1">
    <location>
        <position position="236"/>
    </location>
</feature>
<evidence type="ECO:0000255" key="1">
    <source>
        <dbReference type="HAMAP-Rule" id="MF_01693"/>
    </source>
</evidence>
<dbReference type="EC" id="2.3.1.47" evidence="1"/>
<dbReference type="EMBL" id="CP000926">
    <property type="protein sequence ID" value="ABY96304.1"/>
    <property type="molecule type" value="Genomic_DNA"/>
</dbReference>
<dbReference type="RefSeq" id="WP_012270163.1">
    <property type="nucleotide sequence ID" value="NC_010322.1"/>
</dbReference>
<dbReference type="SMR" id="B0KJ54"/>
<dbReference type="KEGG" id="ppg:PputGB1_0393"/>
<dbReference type="eggNOG" id="COG0156">
    <property type="taxonomic scope" value="Bacteria"/>
</dbReference>
<dbReference type="HOGENOM" id="CLU_015846_11_2_6"/>
<dbReference type="UniPathway" id="UPA00078"/>
<dbReference type="Proteomes" id="UP000002157">
    <property type="component" value="Chromosome"/>
</dbReference>
<dbReference type="GO" id="GO:0008710">
    <property type="term" value="F:8-amino-7-oxononanoate synthase activity"/>
    <property type="evidence" value="ECO:0007669"/>
    <property type="project" value="UniProtKB-UniRule"/>
</dbReference>
<dbReference type="GO" id="GO:0030170">
    <property type="term" value="F:pyridoxal phosphate binding"/>
    <property type="evidence" value="ECO:0007669"/>
    <property type="project" value="UniProtKB-UniRule"/>
</dbReference>
<dbReference type="GO" id="GO:0009102">
    <property type="term" value="P:biotin biosynthetic process"/>
    <property type="evidence" value="ECO:0007669"/>
    <property type="project" value="UniProtKB-UniRule"/>
</dbReference>
<dbReference type="CDD" id="cd06454">
    <property type="entry name" value="KBL_like"/>
    <property type="match status" value="1"/>
</dbReference>
<dbReference type="Gene3D" id="3.90.1150.10">
    <property type="entry name" value="Aspartate Aminotransferase, domain 1"/>
    <property type="match status" value="1"/>
</dbReference>
<dbReference type="Gene3D" id="3.40.640.10">
    <property type="entry name" value="Type I PLP-dependent aspartate aminotransferase-like (Major domain)"/>
    <property type="match status" value="1"/>
</dbReference>
<dbReference type="HAMAP" id="MF_01693">
    <property type="entry name" value="BioF_aminotrans_2"/>
    <property type="match status" value="1"/>
</dbReference>
<dbReference type="InterPro" id="IPR004839">
    <property type="entry name" value="Aminotransferase_I/II_large"/>
</dbReference>
<dbReference type="InterPro" id="IPR050087">
    <property type="entry name" value="AON_synthase_class-II"/>
</dbReference>
<dbReference type="InterPro" id="IPR004723">
    <property type="entry name" value="AONS_Archaea/Proteobacteria"/>
</dbReference>
<dbReference type="InterPro" id="IPR022834">
    <property type="entry name" value="AONS_Proteobacteria"/>
</dbReference>
<dbReference type="InterPro" id="IPR015424">
    <property type="entry name" value="PyrdxlP-dep_Trfase"/>
</dbReference>
<dbReference type="InterPro" id="IPR015421">
    <property type="entry name" value="PyrdxlP-dep_Trfase_major"/>
</dbReference>
<dbReference type="InterPro" id="IPR015422">
    <property type="entry name" value="PyrdxlP-dep_Trfase_small"/>
</dbReference>
<dbReference type="NCBIfam" id="TIGR00858">
    <property type="entry name" value="bioF"/>
    <property type="match status" value="1"/>
</dbReference>
<dbReference type="PANTHER" id="PTHR13693:SF100">
    <property type="entry name" value="8-AMINO-7-OXONONANOATE SYNTHASE"/>
    <property type="match status" value="1"/>
</dbReference>
<dbReference type="PANTHER" id="PTHR13693">
    <property type="entry name" value="CLASS II AMINOTRANSFERASE/8-AMINO-7-OXONONANOATE SYNTHASE"/>
    <property type="match status" value="1"/>
</dbReference>
<dbReference type="Pfam" id="PF00155">
    <property type="entry name" value="Aminotran_1_2"/>
    <property type="match status" value="1"/>
</dbReference>
<dbReference type="SUPFAM" id="SSF53383">
    <property type="entry name" value="PLP-dependent transferases"/>
    <property type="match status" value="1"/>
</dbReference>
<accession>B0KJ54</accession>